<comment type="function">
    <text evidence="1">Specifically catalyzes the NAD or NADP-dependent dehydrogenation of L-aspartate to iminoaspartate.</text>
</comment>
<comment type="catalytic activity">
    <reaction evidence="1">
        <text>L-aspartate + NADP(+) + H2O = oxaloacetate + NH4(+) + NADPH + H(+)</text>
        <dbReference type="Rhea" id="RHEA:11784"/>
        <dbReference type="ChEBI" id="CHEBI:15377"/>
        <dbReference type="ChEBI" id="CHEBI:15378"/>
        <dbReference type="ChEBI" id="CHEBI:16452"/>
        <dbReference type="ChEBI" id="CHEBI:28938"/>
        <dbReference type="ChEBI" id="CHEBI:29991"/>
        <dbReference type="ChEBI" id="CHEBI:57783"/>
        <dbReference type="ChEBI" id="CHEBI:58349"/>
        <dbReference type="EC" id="1.4.1.21"/>
    </reaction>
</comment>
<comment type="catalytic activity">
    <reaction evidence="1">
        <text>L-aspartate + NAD(+) + H2O = oxaloacetate + NH4(+) + NADH + H(+)</text>
        <dbReference type="Rhea" id="RHEA:11788"/>
        <dbReference type="ChEBI" id="CHEBI:15377"/>
        <dbReference type="ChEBI" id="CHEBI:15378"/>
        <dbReference type="ChEBI" id="CHEBI:16452"/>
        <dbReference type="ChEBI" id="CHEBI:28938"/>
        <dbReference type="ChEBI" id="CHEBI:29991"/>
        <dbReference type="ChEBI" id="CHEBI:57540"/>
        <dbReference type="ChEBI" id="CHEBI:57945"/>
        <dbReference type="EC" id="1.4.1.21"/>
    </reaction>
</comment>
<comment type="pathway">
    <text evidence="1">Cofactor biosynthesis; NAD(+) biosynthesis; iminoaspartate from L-aspartate (dehydrogenase route): step 1/1.</text>
</comment>
<comment type="miscellaneous">
    <text evidence="1">The iminoaspartate product is unstable in aqueous solution and can decompose to oxaloacetate and ammonia.</text>
</comment>
<comment type="similarity">
    <text evidence="1">Belongs to the L-aspartate dehydrogenase family.</text>
</comment>
<name>ASPD_ACIB5</name>
<keyword id="KW-0520">NAD</keyword>
<keyword id="KW-0521">NADP</keyword>
<keyword id="KW-0560">Oxidoreductase</keyword>
<keyword id="KW-0662">Pyridine nucleotide biosynthesis</keyword>
<reference key="1">
    <citation type="journal article" date="2008" name="J. Bacteriol.">
        <title>Comparative genome sequence analysis of multidrug-resistant Acinetobacter baumannii.</title>
        <authorList>
            <person name="Adams M.D."/>
            <person name="Goglin K."/>
            <person name="Molyneaux N."/>
            <person name="Hujer K.M."/>
            <person name="Lavender H."/>
            <person name="Jamison J.J."/>
            <person name="MacDonald I.J."/>
            <person name="Martin K.M."/>
            <person name="Russo T."/>
            <person name="Campagnari A.A."/>
            <person name="Hujer A.M."/>
            <person name="Bonomo R.A."/>
            <person name="Gill S.R."/>
        </authorList>
    </citation>
    <scope>NUCLEOTIDE SEQUENCE [LARGE SCALE GENOMIC DNA]</scope>
    <source>
        <strain>AB0057</strain>
    </source>
</reference>
<protein>
    <recommendedName>
        <fullName evidence="1">L-aspartate dehydrogenase</fullName>
        <ecNumber evidence="1">1.4.1.21</ecNumber>
    </recommendedName>
</protein>
<gene>
    <name evidence="1" type="primary">nadX</name>
    <name type="ordered locus">AB57_1031</name>
</gene>
<evidence type="ECO:0000255" key="1">
    <source>
        <dbReference type="HAMAP-Rule" id="MF_01265"/>
    </source>
</evidence>
<proteinExistence type="inferred from homology"/>
<organism>
    <name type="scientific">Acinetobacter baumannii (strain AB0057)</name>
    <dbReference type="NCBI Taxonomy" id="480119"/>
    <lineage>
        <taxon>Bacteria</taxon>
        <taxon>Pseudomonadati</taxon>
        <taxon>Pseudomonadota</taxon>
        <taxon>Gammaproteobacteria</taxon>
        <taxon>Moraxellales</taxon>
        <taxon>Moraxellaceae</taxon>
        <taxon>Acinetobacter</taxon>
        <taxon>Acinetobacter calcoaceticus/baumannii complex</taxon>
    </lineage>
</organism>
<accession>B7I8C4</accession>
<sequence length="263" mass="27954">MKKLMMIGFGAMAAEVYAHLPQDLQLKWIVVPSRSIEKVQSQVSSDIQVISDIEQCDGTPDYVIEVAGQAAVKEHAQKVLAKGWTIGLISVGTLADSEFLVQLKQTAEKNDAHLHLLAGAIAGIDGISAAKEGGLQKVTYKGCKSPKSWKGSYAEQLVDLDHVSEPTVFFTGTAREAAMKFPANANVAATIALAGLGMDETMVELTVDPTINKNKHTIVAEGGFGQMTIELVGVPLPSNPKTSTLAALSVIRACRNSVEAIQI</sequence>
<feature type="chain" id="PRO_1000140082" description="L-aspartate dehydrogenase">
    <location>
        <begin position="1"/>
        <end position="263"/>
    </location>
</feature>
<feature type="active site" evidence="1">
    <location>
        <position position="216"/>
    </location>
</feature>
<feature type="binding site" evidence="1">
    <location>
        <position position="120"/>
    </location>
    <ligand>
        <name>NAD(+)</name>
        <dbReference type="ChEBI" id="CHEBI:57540"/>
    </ligand>
</feature>
<feature type="binding site" evidence="1">
    <location>
        <position position="186"/>
    </location>
    <ligand>
        <name>NAD(+)</name>
        <dbReference type="ChEBI" id="CHEBI:57540"/>
    </ligand>
</feature>
<dbReference type="EC" id="1.4.1.21" evidence="1"/>
<dbReference type="EMBL" id="CP001182">
    <property type="protein sequence ID" value="ACJ40823.1"/>
    <property type="molecule type" value="Genomic_DNA"/>
</dbReference>
<dbReference type="RefSeq" id="WP_000735778.1">
    <property type="nucleotide sequence ID" value="NC_011586.2"/>
</dbReference>
<dbReference type="SMR" id="B7I8C4"/>
<dbReference type="KEGG" id="abn:AB57_1031"/>
<dbReference type="HOGENOM" id="CLU_089550_0_0_6"/>
<dbReference type="UniPathway" id="UPA00253">
    <property type="reaction ID" value="UER00456"/>
</dbReference>
<dbReference type="Proteomes" id="UP000007094">
    <property type="component" value="Chromosome"/>
</dbReference>
<dbReference type="GO" id="GO:0033735">
    <property type="term" value="F:aspartate dehydrogenase activity"/>
    <property type="evidence" value="ECO:0007669"/>
    <property type="project" value="UniProtKB-EC"/>
</dbReference>
<dbReference type="GO" id="GO:0051287">
    <property type="term" value="F:NAD binding"/>
    <property type="evidence" value="ECO:0007669"/>
    <property type="project" value="UniProtKB-UniRule"/>
</dbReference>
<dbReference type="GO" id="GO:0050661">
    <property type="term" value="F:NADP binding"/>
    <property type="evidence" value="ECO:0007669"/>
    <property type="project" value="UniProtKB-UniRule"/>
</dbReference>
<dbReference type="GO" id="GO:0016639">
    <property type="term" value="F:oxidoreductase activity, acting on the CH-NH2 group of donors, NAD or NADP as acceptor"/>
    <property type="evidence" value="ECO:0007669"/>
    <property type="project" value="UniProtKB-UniRule"/>
</dbReference>
<dbReference type="GO" id="GO:0009435">
    <property type="term" value="P:NAD biosynthetic process"/>
    <property type="evidence" value="ECO:0007669"/>
    <property type="project" value="UniProtKB-UniRule"/>
</dbReference>
<dbReference type="Gene3D" id="3.30.360.10">
    <property type="entry name" value="Dihydrodipicolinate Reductase, domain 2"/>
    <property type="match status" value="1"/>
</dbReference>
<dbReference type="Gene3D" id="3.40.50.720">
    <property type="entry name" value="NAD(P)-binding Rossmann-like Domain"/>
    <property type="match status" value="1"/>
</dbReference>
<dbReference type="HAMAP" id="MF_01265">
    <property type="entry name" value="NadX"/>
    <property type="match status" value="1"/>
</dbReference>
<dbReference type="InterPro" id="IPR005106">
    <property type="entry name" value="Asp/hSer_DH_NAD-bd"/>
</dbReference>
<dbReference type="InterPro" id="IPR002811">
    <property type="entry name" value="Asp_DH"/>
</dbReference>
<dbReference type="InterPro" id="IPR020626">
    <property type="entry name" value="Asp_DH_prok"/>
</dbReference>
<dbReference type="InterPro" id="IPR011182">
    <property type="entry name" value="L-Asp_DH"/>
</dbReference>
<dbReference type="InterPro" id="IPR036291">
    <property type="entry name" value="NAD(P)-bd_dom_sf"/>
</dbReference>
<dbReference type="NCBIfam" id="NF009827">
    <property type="entry name" value="PRK13303.1-2"/>
    <property type="match status" value="1"/>
</dbReference>
<dbReference type="NCBIfam" id="NF009828">
    <property type="entry name" value="PRK13303.1-3"/>
    <property type="match status" value="1"/>
</dbReference>
<dbReference type="PANTHER" id="PTHR31873:SF6">
    <property type="entry name" value="ASPARTATE DEHYDROGENASE DOMAIN-CONTAINING PROTEIN"/>
    <property type="match status" value="1"/>
</dbReference>
<dbReference type="PANTHER" id="PTHR31873">
    <property type="entry name" value="L-ASPARTATE DEHYDROGENASE-RELATED"/>
    <property type="match status" value="1"/>
</dbReference>
<dbReference type="Pfam" id="PF01958">
    <property type="entry name" value="Asp_DH_C"/>
    <property type="match status" value="1"/>
</dbReference>
<dbReference type="Pfam" id="PF03447">
    <property type="entry name" value="NAD_binding_3"/>
    <property type="match status" value="1"/>
</dbReference>
<dbReference type="PIRSF" id="PIRSF005227">
    <property type="entry name" value="Asp_dh_NAD_syn"/>
    <property type="match status" value="1"/>
</dbReference>
<dbReference type="SUPFAM" id="SSF55347">
    <property type="entry name" value="Glyceraldehyde-3-phosphate dehydrogenase-like, C-terminal domain"/>
    <property type="match status" value="1"/>
</dbReference>
<dbReference type="SUPFAM" id="SSF51735">
    <property type="entry name" value="NAD(P)-binding Rossmann-fold domains"/>
    <property type="match status" value="1"/>
</dbReference>